<accession>P43001</accession>
<reference key="1">
    <citation type="journal article" date="1993" name="J. Mol. Endocrinol.">
        <title>Cloning of a toad prolactin cDNA: expression of prolactin mRNA in larval and adult pituitaries.</title>
        <authorList>
            <person name="Takahashi N."/>
            <person name="Yamamoto K."/>
            <person name="Kikuyama S."/>
        </authorList>
    </citation>
    <scope>NUCLEOTIDE SEQUENCE [MRNA]</scope>
    <source>
        <tissue>Pituitary</tissue>
    </source>
</reference>
<organism>
    <name type="scientific">Bufo japonicus</name>
    <name type="common">Japanese common toad</name>
    <name type="synonym">Bufo praetextatus</name>
    <dbReference type="NCBI Taxonomy" id="8387"/>
    <lineage>
        <taxon>Eukaryota</taxon>
        <taxon>Metazoa</taxon>
        <taxon>Chordata</taxon>
        <taxon>Craniata</taxon>
        <taxon>Vertebrata</taxon>
        <taxon>Euteleostomi</taxon>
        <taxon>Amphibia</taxon>
        <taxon>Batrachia</taxon>
        <taxon>Anura</taxon>
        <taxon>Neobatrachia</taxon>
        <taxon>Hyloidea</taxon>
        <taxon>Bufonidae</taxon>
        <taxon>Bufo</taxon>
    </lineage>
</organism>
<keyword id="KW-1015">Disulfide bond</keyword>
<keyword id="KW-0372">Hormone</keyword>
<keyword id="KW-0964">Secreted</keyword>
<name>PRL_BUFJA</name>
<dbReference type="EMBL" id="S69309">
    <property type="protein sequence ID" value="AAB30425.1"/>
    <property type="molecule type" value="mRNA"/>
</dbReference>
<dbReference type="PIR" id="I51233">
    <property type="entry name" value="I51233"/>
</dbReference>
<dbReference type="SMR" id="P43001"/>
<dbReference type="GO" id="GO:0005615">
    <property type="term" value="C:extracellular space"/>
    <property type="evidence" value="ECO:0007669"/>
    <property type="project" value="TreeGrafter"/>
</dbReference>
<dbReference type="GO" id="GO:0005179">
    <property type="term" value="F:hormone activity"/>
    <property type="evidence" value="ECO:0007669"/>
    <property type="project" value="UniProtKB-KW"/>
</dbReference>
<dbReference type="GO" id="GO:0008284">
    <property type="term" value="P:positive regulation of cell population proliferation"/>
    <property type="evidence" value="ECO:0007669"/>
    <property type="project" value="TreeGrafter"/>
</dbReference>
<dbReference type="GO" id="GO:0046427">
    <property type="term" value="P:positive regulation of receptor signaling pathway via JAK-STAT"/>
    <property type="evidence" value="ECO:0007669"/>
    <property type="project" value="TreeGrafter"/>
</dbReference>
<dbReference type="GO" id="GO:0031667">
    <property type="term" value="P:response to nutrient levels"/>
    <property type="evidence" value="ECO:0007669"/>
    <property type="project" value="TreeGrafter"/>
</dbReference>
<dbReference type="CDD" id="cd10288">
    <property type="entry name" value="prolactin_like"/>
    <property type="match status" value="1"/>
</dbReference>
<dbReference type="Gene3D" id="1.20.1250.10">
    <property type="match status" value="1"/>
</dbReference>
<dbReference type="InterPro" id="IPR009079">
    <property type="entry name" value="4_helix_cytokine-like_core"/>
</dbReference>
<dbReference type="InterPro" id="IPR001400">
    <property type="entry name" value="Somatotropin/Prolactin"/>
</dbReference>
<dbReference type="InterPro" id="IPR018116">
    <property type="entry name" value="Somatotropin_CS"/>
</dbReference>
<dbReference type="PANTHER" id="PTHR11417:SF5">
    <property type="entry name" value="PROLACTIN"/>
    <property type="match status" value="1"/>
</dbReference>
<dbReference type="PANTHER" id="PTHR11417">
    <property type="entry name" value="SOMATOTROPIN,PROLACTIN"/>
    <property type="match status" value="1"/>
</dbReference>
<dbReference type="Pfam" id="PF00103">
    <property type="entry name" value="Hormone_1"/>
    <property type="match status" value="1"/>
</dbReference>
<dbReference type="PRINTS" id="PR00836">
    <property type="entry name" value="SOMATOTROPIN"/>
</dbReference>
<dbReference type="SUPFAM" id="SSF47266">
    <property type="entry name" value="4-helical cytokines"/>
    <property type="match status" value="1"/>
</dbReference>
<dbReference type="PROSITE" id="PS00338">
    <property type="entry name" value="SOMATOTROPIN_2"/>
    <property type="match status" value="1"/>
</dbReference>
<comment type="subcellular location">
    <subcellularLocation>
        <location>Secreted</location>
    </subcellularLocation>
</comment>
<comment type="similarity">
    <text evidence="2">Belongs to the somatotropin/prolactin family.</text>
</comment>
<proteinExistence type="evidence at transcript level"/>
<sequence length="134" mass="15520">PEDKEQAQQIQHEDLLSLVLKVLRSWNDPLLHMVSEVQDIQEAPDTILWKAVEIEEQTKRLLEGMERIVGRIHPGDLENEIYSPWPGPSAAIPGDESSRLFAFYNLLHCLRRDSHKIDNYLKLLKCRLIHDGNC</sequence>
<evidence type="ECO:0000250" key="1"/>
<evidence type="ECO:0000305" key="2"/>
<protein>
    <recommendedName>
        <fullName>Prolactin</fullName>
        <shortName>PRL</shortName>
    </recommendedName>
</protein>
<feature type="chain" id="PRO_0000181320" description="Prolactin">
    <location>
        <begin position="1" status="less than"/>
        <end position="134"/>
    </location>
</feature>
<feature type="disulfide bond" evidence="1">
    <location>
        <begin position="126"/>
        <end position="134"/>
    </location>
</feature>
<feature type="non-terminal residue">
    <location>
        <position position="1"/>
    </location>
</feature>